<evidence type="ECO:0000250" key="1"/>
<evidence type="ECO:0000255" key="2"/>
<evidence type="ECO:0000255" key="3">
    <source>
        <dbReference type="PROSITE-ProRule" id="PRU00114"/>
    </source>
</evidence>
<evidence type="ECO:0000255" key="4">
    <source>
        <dbReference type="PROSITE-ProRule" id="PRU00128"/>
    </source>
</evidence>
<evidence type="ECO:0000255" key="5">
    <source>
        <dbReference type="PROSITE-ProRule" id="PRU00160"/>
    </source>
</evidence>
<evidence type="ECO:0000255" key="6">
    <source>
        <dbReference type="PROSITE-ProRule" id="PRU00316"/>
    </source>
</evidence>
<evidence type="ECO:0000269" key="7">
    <source>
    </source>
</evidence>
<evidence type="ECO:0000269" key="8">
    <source>
    </source>
</evidence>
<evidence type="ECO:0000269" key="9">
    <source>
    </source>
</evidence>
<evidence type="ECO:0000269" key="10">
    <source>
    </source>
</evidence>
<evidence type="ECO:0000269" key="11">
    <source>
    </source>
</evidence>
<evidence type="ECO:0000303" key="12">
    <source>
    </source>
</evidence>
<evidence type="ECO:0000305" key="13"/>
<evidence type="ECO:0007744" key="14">
    <source>
        <dbReference type="PDB" id="2V5Y"/>
    </source>
</evidence>
<evidence type="ECO:0007744" key="15">
    <source>
    </source>
</evidence>
<evidence type="ECO:0007829" key="16">
    <source>
        <dbReference type="PDB" id="1RPM"/>
    </source>
</evidence>
<evidence type="ECO:0007829" key="17">
    <source>
        <dbReference type="PDB" id="2C9A"/>
    </source>
</evidence>
<evidence type="ECO:0007829" key="18">
    <source>
        <dbReference type="PDB" id="2V5Y"/>
    </source>
</evidence>
<evidence type="ECO:0007829" key="19">
    <source>
        <dbReference type="PDB" id="8A16"/>
    </source>
</evidence>
<evidence type="ECO:0007829" key="20">
    <source>
        <dbReference type="PDB" id="8A17"/>
    </source>
</evidence>
<protein>
    <recommendedName>
        <fullName>Receptor-type tyrosine-protein phosphatase mu</fullName>
        <shortName>Protein-tyrosine phosphatase mu</shortName>
        <shortName>R-PTP-mu</shortName>
        <ecNumber>3.1.3.48</ecNumber>
    </recommendedName>
</protein>
<dbReference type="EC" id="3.1.3.48"/>
<dbReference type="EMBL" id="X58288">
    <property type="protein sequence ID" value="CAA41226.1"/>
    <property type="molecule type" value="mRNA"/>
</dbReference>
<dbReference type="EMBL" id="AC006566">
    <property type="status" value="NOT_ANNOTATED_CDS"/>
    <property type="molecule type" value="Genomic_DNA"/>
</dbReference>
<dbReference type="EMBL" id="AP000897">
    <property type="status" value="NOT_ANNOTATED_CDS"/>
    <property type="molecule type" value="Genomic_DNA"/>
</dbReference>
<dbReference type="EMBL" id="AP001091">
    <property type="status" value="NOT_ANNOTATED_CDS"/>
    <property type="molecule type" value="Genomic_DNA"/>
</dbReference>
<dbReference type="EMBL" id="AP001094">
    <property type="status" value="NOT_ANNOTATED_CDS"/>
    <property type="molecule type" value="Genomic_DNA"/>
</dbReference>
<dbReference type="EMBL" id="AP005118">
    <property type="status" value="NOT_ANNOTATED_CDS"/>
    <property type="molecule type" value="Genomic_DNA"/>
</dbReference>
<dbReference type="EMBL" id="AP005227">
    <property type="status" value="NOT_ANNOTATED_CDS"/>
    <property type="molecule type" value="Genomic_DNA"/>
</dbReference>
<dbReference type="EMBL" id="AP005900">
    <property type="status" value="NOT_ANNOTATED_CDS"/>
    <property type="molecule type" value="Genomic_DNA"/>
</dbReference>
<dbReference type="EMBL" id="CH471113">
    <property type="protein sequence ID" value="EAX01623.1"/>
    <property type="molecule type" value="Genomic_DNA"/>
</dbReference>
<dbReference type="EMBL" id="CH471113">
    <property type="protein sequence ID" value="EAX01624.1"/>
    <property type="molecule type" value="Genomic_DNA"/>
</dbReference>
<dbReference type="EMBL" id="BC151842">
    <property type="protein sequence ID" value="AAI51843.1"/>
    <property type="molecule type" value="mRNA"/>
</dbReference>
<dbReference type="CCDS" id="CCDS11840.1">
    <molecule id="P28827-1"/>
</dbReference>
<dbReference type="CCDS" id="CCDS58613.1">
    <molecule id="P28827-2"/>
</dbReference>
<dbReference type="PIR" id="S17669">
    <property type="entry name" value="S17669"/>
</dbReference>
<dbReference type="RefSeq" id="NP_001098714.1">
    <molecule id="P28827-2"/>
    <property type="nucleotide sequence ID" value="NM_001105244.2"/>
</dbReference>
<dbReference type="RefSeq" id="NP_002836.3">
    <molecule id="P28827-1"/>
    <property type="nucleotide sequence ID" value="NM_002845.3"/>
</dbReference>
<dbReference type="PDB" id="1RPM">
    <property type="method" value="X-ray"/>
    <property type="resolution" value="2.30 A"/>
    <property type="chains" value="A/B=879-1156"/>
</dbReference>
<dbReference type="PDB" id="2C9A">
    <property type="method" value="X-ray"/>
    <property type="resolution" value="2.70 A"/>
    <property type="chains" value="A=21-279"/>
</dbReference>
<dbReference type="PDB" id="2V5Y">
    <property type="method" value="X-ray"/>
    <property type="resolution" value="3.10 A"/>
    <property type="chains" value="A=21-742"/>
</dbReference>
<dbReference type="PDB" id="8A16">
    <property type="method" value="X-ray"/>
    <property type="resolution" value="2.89 A"/>
    <property type="chains" value="A/B=477-723"/>
</dbReference>
<dbReference type="PDB" id="8A17">
    <property type="method" value="X-ray"/>
    <property type="resolution" value="3.09 A"/>
    <property type="chains" value="A/B/C/D=477-723"/>
</dbReference>
<dbReference type="PDBsum" id="1RPM"/>
<dbReference type="PDBsum" id="2C9A"/>
<dbReference type="PDBsum" id="2V5Y"/>
<dbReference type="PDBsum" id="8A16"/>
<dbReference type="PDBsum" id="8A17"/>
<dbReference type="SASBDB" id="P28827"/>
<dbReference type="SMR" id="P28827"/>
<dbReference type="BioGRID" id="111761">
    <property type="interactions" value="68"/>
</dbReference>
<dbReference type="DIP" id="DIP-668N"/>
<dbReference type="FunCoup" id="P28827">
    <property type="interactions" value="577"/>
</dbReference>
<dbReference type="IntAct" id="P28827">
    <property type="interactions" value="18"/>
</dbReference>
<dbReference type="MINT" id="P28827"/>
<dbReference type="STRING" id="9606.ENSP00000463325"/>
<dbReference type="BindingDB" id="P28827"/>
<dbReference type="ChEMBL" id="CHEMBL4661"/>
<dbReference type="GuidetoPHARMACOLOGY" id="1860"/>
<dbReference type="DEPOD" id="PTPRM"/>
<dbReference type="GlyConnect" id="1971">
    <property type="glycosylation" value="13 N-Linked glycans (6 sites)"/>
</dbReference>
<dbReference type="GlyCosmos" id="P28827">
    <property type="glycosylation" value="15 sites, 15 glycans"/>
</dbReference>
<dbReference type="GlyGen" id="P28827">
    <property type="glycosylation" value="15 sites, 52 N-linked glycans (8 sites), 1 O-linked glycan (1 site)"/>
</dbReference>
<dbReference type="iPTMnet" id="P28827"/>
<dbReference type="PhosphoSitePlus" id="P28827"/>
<dbReference type="SwissPalm" id="P28827"/>
<dbReference type="BioMuta" id="PTPRM"/>
<dbReference type="DMDM" id="206729890"/>
<dbReference type="jPOST" id="P28827"/>
<dbReference type="MassIVE" id="P28827"/>
<dbReference type="PaxDb" id="9606-ENSP00000463325"/>
<dbReference type="PeptideAtlas" id="P28827"/>
<dbReference type="ProteomicsDB" id="54501">
    <molecule id="P28827-1"/>
</dbReference>
<dbReference type="Antibodypedia" id="21926">
    <property type="antibodies" value="223 antibodies from 33 providers"/>
</dbReference>
<dbReference type="DNASU" id="5797"/>
<dbReference type="Ensembl" id="ENST00000332175.12">
    <molecule id="P28827-1"/>
    <property type="protein sequence ID" value="ENSP00000331418.8"/>
    <property type="gene ID" value="ENSG00000173482.17"/>
</dbReference>
<dbReference type="Ensembl" id="ENST00000580170.6">
    <molecule id="P28827-2"/>
    <property type="protein sequence ID" value="ENSP00000463325.1"/>
    <property type="gene ID" value="ENSG00000173482.17"/>
</dbReference>
<dbReference type="GeneID" id="5797"/>
<dbReference type="KEGG" id="hsa:5797"/>
<dbReference type="MANE-Select" id="ENST00000580170.6">
    <molecule id="P28827-2"/>
    <property type="protein sequence ID" value="ENSP00000463325.1"/>
    <property type="RefSeq nucleotide sequence ID" value="NM_001105244.2"/>
    <property type="RefSeq protein sequence ID" value="NP_001098714.1"/>
</dbReference>
<dbReference type="UCSC" id="uc002knn.5">
    <molecule id="P28827-1"/>
    <property type="organism name" value="human"/>
</dbReference>
<dbReference type="AGR" id="HGNC:9675"/>
<dbReference type="CTD" id="5797"/>
<dbReference type="DisGeNET" id="5797"/>
<dbReference type="GeneCards" id="PTPRM"/>
<dbReference type="HGNC" id="HGNC:9675">
    <property type="gene designation" value="PTPRM"/>
</dbReference>
<dbReference type="HPA" id="ENSG00000173482">
    <property type="expression patterns" value="Low tissue specificity"/>
</dbReference>
<dbReference type="MIM" id="176888">
    <property type="type" value="gene"/>
</dbReference>
<dbReference type="neXtProt" id="NX_P28827"/>
<dbReference type="OpenTargets" id="ENSG00000173482"/>
<dbReference type="PharmGKB" id="PA34020"/>
<dbReference type="VEuPathDB" id="HostDB:ENSG00000173482"/>
<dbReference type="eggNOG" id="KOG4228">
    <property type="taxonomic scope" value="Eukaryota"/>
</dbReference>
<dbReference type="GeneTree" id="ENSGT00940000155020"/>
<dbReference type="InParanoid" id="P28827"/>
<dbReference type="OrthoDB" id="10253954at2759"/>
<dbReference type="PAN-GO" id="P28827">
    <property type="GO annotations" value="2 GO annotations based on evolutionary models"/>
</dbReference>
<dbReference type="PhylomeDB" id="P28827"/>
<dbReference type="TreeFam" id="TF312900"/>
<dbReference type="BRENDA" id="3.1.3.48">
    <property type="organism ID" value="2681"/>
</dbReference>
<dbReference type="PathwayCommons" id="P28827"/>
<dbReference type="SignaLink" id="P28827"/>
<dbReference type="SIGNOR" id="P28827"/>
<dbReference type="BioGRID-ORCS" id="5797">
    <property type="hits" value="20 hits in 1161 CRISPR screens"/>
</dbReference>
<dbReference type="ChiTaRS" id="PTPRM">
    <property type="organism name" value="human"/>
</dbReference>
<dbReference type="EvolutionaryTrace" id="P28827"/>
<dbReference type="GeneWiki" id="PTPRM"/>
<dbReference type="GenomeRNAi" id="5797"/>
<dbReference type="Pharos" id="P28827">
    <property type="development level" value="Tchem"/>
</dbReference>
<dbReference type="PRO" id="PR:P28827"/>
<dbReference type="Proteomes" id="UP000005640">
    <property type="component" value="Chromosome 18"/>
</dbReference>
<dbReference type="RNAct" id="P28827">
    <property type="molecule type" value="protein"/>
</dbReference>
<dbReference type="Bgee" id="ENSG00000173482">
    <property type="expression patterns" value="Expressed in ventricular zone and 194 other cell types or tissues"/>
</dbReference>
<dbReference type="ExpressionAtlas" id="P28827">
    <property type="expression patterns" value="baseline and differential"/>
</dbReference>
<dbReference type="GO" id="GO:0005912">
    <property type="term" value="C:adherens junction"/>
    <property type="evidence" value="ECO:0000314"/>
    <property type="project" value="UniProtKB"/>
</dbReference>
<dbReference type="GO" id="GO:0005911">
    <property type="term" value="C:cell-cell junction"/>
    <property type="evidence" value="ECO:0000314"/>
    <property type="project" value="UniProtKB"/>
</dbReference>
<dbReference type="GO" id="GO:0005737">
    <property type="term" value="C:cytoplasm"/>
    <property type="evidence" value="ECO:0000314"/>
    <property type="project" value="UniProtKB"/>
</dbReference>
<dbReference type="GO" id="GO:0030027">
    <property type="term" value="C:lamellipodium"/>
    <property type="evidence" value="ECO:0000314"/>
    <property type="project" value="MGI"/>
</dbReference>
<dbReference type="GO" id="GO:0048471">
    <property type="term" value="C:perinuclear region of cytoplasm"/>
    <property type="evidence" value="ECO:0000314"/>
    <property type="project" value="UniProtKB"/>
</dbReference>
<dbReference type="GO" id="GO:0005886">
    <property type="term" value="C:plasma membrane"/>
    <property type="evidence" value="ECO:0000314"/>
    <property type="project" value="HPA"/>
</dbReference>
<dbReference type="GO" id="GO:0045296">
    <property type="term" value="F:cadherin binding"/>
    <property type="evidence" value="ECO:0000314"/>
    <property type="project" value="UniProtKB"/>
</dbReference>
<dbReference type="GO" id="GO:0042802">
    <property type="term" value="F:identical protein binding"/>
    <property type="evidence" value="ECO:0000353"/>
    <property type="project" value="IntAct"/>
</dbReference>
<dbReference type="GO" id="GO:0016791">
    <property type="term" value="F:phosphatase activity"/>
    <property type="evidence" value="ECO:0000314"/>
    <property type="project" value="UniProt"/>
</dbReference>
<dbReference type="GO" id="GO:0004725">
    <property type="term" value="F:protein tyrosine phosphatase activity"/>
    <property type="evidence" value="ECO:0000314"/>
    <property type="project" value="UniProtKB"/>
</dbReference>
<dbReference type="GO" id="GO:0005001">
    <property type="term" value="F:transmembrane receptor protein tyrosine phosphatase activity"/>
    <property type="evidence" value="ECO:0000314"/>
    <property type="project" value="UniProtKB"/>
</dbReference>
<dbReference type="GO" id="GO:0007156">
    <property type="term" value="P:homophilic cell adhesion via plasma membrane adhesion molecules"/>
    <property type="evidence" value="ECO:0000314"/>
    <property type="project" value="UniProtKB"/>
</dbReference>
<dbReference type="GO" id="GO:0016525">
    <property type="term" value="P:negative regulation of angiogenesis"/>
    <property type="evidence" value="ECO:0000315"/>
    <property type="project" value="UniProtKB"/>
</dbReference>
<dbReference type="GO" id="GO:0010596">
    <property type="term" value="P:negative regulation of endothelial cell migration"/>
    <property type="evidence" value="ECO:0000315"/>
    <property type="project" value="UniProtKB"/>
</dbReference>
<dbReference type="GO" id="GO:0001937">
    <property type="term" value="P:negative regulation of endothelial cell proliferation"/>
    <property type="evidence" value="ECO:0000315"/>
    <property type="project" value="UniProtKB"/>
</dbReference>
<dbReference type="GO" id="GO:0031175">
    <property type="term" value="P:neuron projection development"/>
    <property type="evidence" value="ECO:0000314"/>
    <property type="project" value="UniProtKB"/>
</dbReference>
<dbReference type="GO" id="GO:0010828">
    <property type="term" value="P:positive regulation of D-glucose transmembrane transport"/>
    <property type="evidence" value="ECO:0000314"/>
    <property type="project" value="UniProt"/>
</dbReference>
<dbReference type="GO" id="GO:0009410">
    <property type="term" value="P:response to xenobiotic stimulus"/>
    <property type="evidence" value="ECO:0000314"/>
    <property type="project" value="UniProtKB"/>
</dbReference>
<dbReference type="GO" id="GO:0010842">
    <property type="term" value="P:retina layer formation"/>
    <property type="evidence" value="ECO:0000315"/>
    <property type="project" value="UniProtKB"/>
</dbReference>
<dbReference type="GO" id="GO:0031290">
    <property type="term" value="P:retinal ganglion cell axon guidance"/>
    <property type="evidence" value="ECO:0000314"/>
    <property type="project" value="UniProtKB"/>
</dbReference>
<dbReference type="GO" id="GO:0007165">
    <property type="term" value="P:signal transduction"/>
    <property type="evidence" value="ECO:0000314"/>
    <property type="project" value="UniProtKB"/>
</dbReference>
<dbReference type="CDD" id="cd00063">
    <property type="entry name" value="FN3"/>
    <property type="match status" value="3"/>
</dbReference>
<dbReference type="CDD" id="cd06263">
    <property type="entry name" value="MAM"/>
    <property type="match status" value="1"/>
</dbReference>
<dbReference type="CDD" id="cd14633">
    <property type="entry name" value="R-PTPc-M-1"/>
    <property type="match status" value="1"/>
</dbReference>
<dbReference type="CDD" id="cd14635">
    <property type="entry name" value="R-PTPc-M-2"/>
    <property type="match status" value="1"/>
</dbReference>
<dbReference type="DisProt" id="DP02580"/>
<dbReference type="FunFam" id="3.90.190.10:FF:000003">
    <property type="entry name" value="receptor-type tyrosine-protein phosphatase kappa isoform X1"/>
    <property type="match status" value="1"/>
</dbReference>
<dbReference type="FunFam" id="3.90.190.10:FF:000005">
    <property type="entry name" value="receptor-type tyrosine-protein phosphatase kappa isoform X1"/>
    <property type="match status" value="1"/>
</dbReference>
<dbReference type="FunFam" id="2.60.40.10:FF:000019">
    <property type="entry name" value="receptor-type tyrosine-protein phosphatase kappa isoform X2"/>
    <property type="match status" value="1"/>
</dbReference>
<dbReference type="FunFam" id="2.60.120.200:FF:000006">
    <property type="entry name" value="receptor-type tyrosine-protein phosphatase T isoform X1"/>
    <property type="match status" value="1"/>
</dbReference>
<dbReference type="FunFam" id="2.60.40.10:FF:000152">
    <property type="entry name" value="receptor-type tyrosine-protein phosphatase T isoform X1"/>
    <property type="match status" value="1"/>
</dbReference>
<dbReference type="FunFam" id="2.60.40.10:FF:000009">
    <property type="entry name" value="receptor-type tyrosine-protein phosphatase U isoform X1"/>
    <property type="match status" value="1"/>
</dbReference>
<dbReference type="FunFam" id="2.60.40.10:FF:000025">
    <property type="entry name" value="receptor-type tyrosine-protein phosphatase U isoform X2"/>
    <property type="match status" value="1"/>
</dbReference>
<dbReference type="Gene3D" id="2.60.120.200">
    <property type="match status" value="1"/>
</dbReference>
<dbReference type="Gene3D" id="2.60.40.10">
    <property type="entry name" value="Immunoglobulins"/>
    <property type="match status" value="4"/>
</dbReference>
<dbReference type="Gene3D" id="3.90.190.10">
    <property type="entry name" value="Protein tyrosine phosphatase superfamily"/>
    <property type="match status" value="2"/>
</dbReference>
<dbReference type="InterPro" id="IPR013320">
    <property type="entry name" value="ConA-like_dom_sf"/>
</dbReference>
<dbReference type="InterPro" id="IPR003961">
    <property type="entry name" value="FN3_dom"/>
</dbReference>
<dbReference type="InterPro" id="IPR036116">
    <property type="entry name" value="FN3_sf"/>
</dbReference>
<dbReference type="InterPro" id="IPR007110">
    <property type="entry name" value="Ig-like_dom"/>
</dbReference>
<dbReference type="InterPro" id="IPR036179">
    <property type="entry name" value="Ig-like_dom_sf"/>
</dbReference>
<dbReference type="InterPro" id="IPR013783">
    <property type="entry name" value="Ig-like_fold"/>
</dbReference>
<dbReference type="InterPro" id="IPR003599">
    <property type="entry name" value="Ig_sub"/>
</dbReference>
<dbReference type="InterPro" id="IPR013151">
    <property type="entry name" value="Immunoglobulin_dom"/>
</dbReference>
<dbReference type="InterPro" id="IPR000998">
    <property type="entry name" value="MAM_dom"/>
</dbReference>
<dbReference type="InterPro" id="IPR029021">
    <property type="entry name" value="Prot-tyrosine_phosphatase-like"/>
</dbReference>
<dbReference type="InterPro" id="IPR000242">
    <property type="entry name" value="PTP_cat"/>
</dbReference>
<dbReference type="InterPro" id="IPR045911">
    <property type="entry name" value="R-PTP-mu_cat_rpt1"/>
</dbReference>
<dbReference type="InterPro" id="IPR051622">
    <property type="entry name" value="R-tyr_protein_phosphatases"/>
</dbReference>
<dbReference type="InterPro" id="IPR016130">
    <property type="entry name" value="Tyr_Pase_AS"/>
</dbReference>
<dbReference type="InterPro" id="IPR003595">
    <property type="entry name" value="Tyr_Pase_cat"/>
</dbReference>
<dbReference type="InterPro" id="IPR000387">
    <property type="entry name" value="Tyr_Pase_dom"/>
</dbReference>
<dbReference type="PANTHER" id="PTHR24051:SF11">
    <property type="entry name" value="PROTEIN TYROSINE PHOSPHATASE, RECEPTOR TYPE, M"/>
    <property type="match status" value="1"/>
</dbReference>
<dbReference type="PANTHER" id="PTHR24051">
    <property type="entry name" value="SUSHI DOMAIN-CONTAINING PROTEIN 1"/>
    <property type="match status" value="1"/>
</dbReference>
<dbReference type="Pfam" id="PF00041">
    <property type="entry name" value="fn3"/>
    <property type="match status" value="1"/>
</dbReference>
<dbReference type="Pfam" id="PF23144">
    <property type="entry name" value="Fn3_PTPRU"/>
    <property type="match status" value="1"/>
</dbReference>
<dbReference type="Pfam" id="PF00047">
    <property type="entry name" value="ig"/>
    <property type="match status" value="1"/>
</dbReference>
<dbReference type="Pfam" id="PF00629">
    <property type="entry name" value="MAM"/>
    <property type="match status" value="1"/>
</dbReference>
<dbReference type="Pfam" id="PF00102">
    <property type="entry name" value="Y_phosphatase"/>
    <property type="match status" value="2"/>
</dbReference>
<dbReference type="PRINTS" id="PR00020">
    <property type="entry name" value="MAMDOMAIN"/>
</dbReference>
<dbReference type="PRINTS" id="PR00700">
    <property type="entry name" value="PRTYPHPHTASE"/>
</dbReference>
<dbReference type="SMART" id="SM00060">
    <property type="entry name" value="FN3"/>
    <property type="match status" value="4"/>
</dbReference>
<dbReference type="SMART" id="SM00409">
    <property type="entry name" value="IG"/>
    <property type="match status" value="1"/>
</dbReference>
<dbReference type="SMART" id="SM00137">
    <property type="entry name" value="MAM"/>
    <property type="match status" value="1"/>
</dbReference>
<dbReference type="SMART" id="SM00194">
    <property type="entry name" value="PTPc"/>
    <property type="match status" value="2"/>
</dbReference>
<dbReference type="SMART" id="SM00404">
    <property type="entry name" value="PTPc_motif"/>
    <property type="match status" value="2"/>
</dbReference>
<dbReference type="SUPFAM" id="SSF52799">
    <property type="entry name" value="(Phosphotyrosine protein) phosphatases II"/>
    <property type="match status" value="2"/>
</dbReference>
<dbReference type="SUPFAM" id="SSF49899">
    <property type="entry name" value="Concanavalin A-like lectins/glucanases"/>
    <property type="match status" value="1"/>
</dbReference>
<dbReference type="SUPFAM" id="SSF49265">
    <property type="entry name" value="Fibronectin type III"/>
    <property type="match status" value="2"/>
</dbReference>
<dbReference type="SUPFAM" id="SSF48726">
    <property type="entry name" value="Immunoglobulin"/>
    <property type="match status" value="1"/>
</dbReference>
<dbReference type="PROSITE" id="PS50853">
    <property type="entry name" value="FN3"/>
    <property type="match status" value="3"/>
</dbReference>
<dbReference type="PROSITE" id="PS50835">
    <property type="entry name" value="IG_LIKE"/>
    <property type="match status" value="1"/>
</dbReference>
<dbReference type="PROSITE" id="PS00740">
    <property type="entry name" value="MAM_1"/>
    <property type="match status" value="1"/>
</dbReference>
<dbReference type="PROSITE" id="PS50060">
    <property type="entry name" value="MAM_2"/>
    <property type="match status" value="1"/>
</dbReference>
<dbReference type="PROSITE" id="PS00383">
    <property type="entry name" value="TYR_PHOSPHATASE_1"/>
    <property type="match status" value="2"/>
</dbReference>
<dbReference type="PROSITE" id="PS50056">
    <property type="entry name" value="TYR_PHOSPHATASE_2"/>
    <property type="match status" value="2"/>
</dbReference>
<dbReference type="PROSITE" id="PS50055">
    <property type="entry name" value="TYR_PHOSPHATASE_PTP"/>
    <property type="match status" value="2"/>
</dbReference>
<accession>P28827</accession>
<accession>A7MBN1</accession>
<accession>D3DUH8</accession>
<accession>J3QL11</accession>
<keyword id="KW-0002">3D-structure</keyword>
<keyword id="KW-0025">Alternative splicing</keyword>
<keyword id="KW-0130">Cell adhesion</keyword>
<keyword id="KW-1003">Cell membrane</keyword>
<keyword id="KW-1015">Disulfide bond</keyword>
<keyword id="KW-0325">Glycoprotein</keyword>
<keyword id="KW-0378">Hydrolase</keyword>
<keyword id="KW-0393">Immunoglobulin domain</keyword>
<keyword id="KW-0472">Membrane</keyword>
<keyword id="KW-0597">Phosphoprotein</keyword>
<keyword id="KW-0904">Protein phosphatase</keyword>
<keyword id="KW-1267">Proteomics identification</keyword>
<keyword id="KW-0675">Receptor</keyword>
<keyword id="KW-1185">Reference proteome</keyword>
<keyword id="KW-0677">Repeat</keyword>
<keyword id="KW-0732">Signal</keyword>
<keyword id="KW-0812">Transmembrane</keyword>
<keyword id="KW-1133">Transmembrane helix</keyword>
<organism>
    <name type="scientific">Homo sapiens</name>
    <name type="common">Human</name>
    <dbReference type="NCBI Taxonomy" id="9606"/>
    <lineage>
        <taxon>Eukaryota</taxon>
        <taxon>Metazoa</taxon>
        <taxon>Chordata</taxon>
        <taxon>Craniata</taxon>
        <taxon>Vertebrata</taxon>
        <taxon>Euteleostomi</taxon>
        <taxon>Mammalia</taxon>
        <taxon>Eutheria</taxon>
        <taxon>Euarchontoglires</taxon>
        <taxon>Primates</taxon>
        <taxon>Haplorrhini</taxon>
        <taxon>Catarrhini</taxon>
        <taxon>Hominidae</taxon>
        <taxon>Homo</taxon>
    </lineage>
</organism>
<name>PTPRM_HUMAN</name>
<reference key="1">
    <citation type="journal article" date="1991" name="FEBS Lett.">
        <title>Cloning, expression and chromosomal localization of a new putative receptor-like protein tyrosine phosphatase.</title>
        <authorList>
            <person name="Gebbink M.F.B.G."/>
            <person name="van Etten I."/>
            <person name="Hateboer G."/>
            <person name="Suijkerbuijk R."/>
            <person name="Beijersbergen R."/>
            <person name="Geurts van Kessel A."/>
            <person name="Moolenaar W.H."/>
        </authorList>
    </citation>
    <scope>NUCLEOTIDE SEQUENCE [MRNA] (ISOFORM 1)</scope>
</reference>
<reference key="2">
    <citation type="journal article" date="2005" name="Nature">
        <title>DNA sequence and analysis of human chromosome 18.</title>
        <authorList>
            <person name="Nusbaum C."/>
            <person name="Zody M.C."/>
            <person name="Borowsky M.L."/>
            <person name="Kamal M."/>
            <person name="Kodira C.D."/>
            <person name="Taylor T.D."/>
            <person name="Whittaker C.A."/>
            <person name="Chang J.L."/>
            <person name="Cuomo C.A."/>
            <person name="Dewar K."/>
            <person name="FitzGerald M.G."/>
            <person name="Yang X."/>
            <person name="Abouelleil A."/>
            <person name="Allen N.R."/>
            <person name="Anderson S."/>
            <person name="Bloom T."/>
            <person name="Bugalter B."/>
            <person name="Butler J."/>
            <person name="Cook A."/>
            <person name="DeCaprio D."/>
            <person name="Engels R."/>
            <person name="Garber M."/>
            <person name="Gnirke A."/>
            <person name="Hafez N."/>
            <person name="Hall J.L."/>
            <person name="Norman C.H."/>
            <person name="Itoh T."/>
            <person name="Jaffe D.B."/>
            <person name="Kuroki Y."/>
            <person name="Lehoczky J."/>
            <person name="Lui A."/>
            <person name="Macdonald P."/>
            <person name="Mauceli E."/>
            <person name="Mikkelsen T.S."/>
            <person name="Naylor J.W."/>
            <person name="Nicol R."/>
            <person name="Nguyen C."/>
            <person name="Noguchi H."/>
            <person name="O'Leary S.B."/>
            <person name="Piqani B."/>
            <person name="Smith C.L."/>
            <person name="Talamas J.A."/>
            <person name="Topham K."/>
            <person name="Totoki Y."/>
            <person name="Toyoda A."/>
            <person name="Wain H.M."/>
            <person name="Young S.K."/>
            <person name="Zeng Q."/>
            <person name="Zimmer A.R."/>
            <person name="Fujiyama A."/>
            <person name="Hattori M."/>
            <person name="Birren B.W."/>
            <person name="Sakaki Y."/>
            <person name="Lander E.S."/>
        </authorList>
    </citation>
    <scope>NUCLEOTIDE SEQUENCE [LARGE SCALE GENOMIC DNA]</scope>
</reference>
<reference key="3">
    <citation type="submission" date="2005-09" db="EMBL/GenBank/DDBJ databases">
        <authorList>
            <person name="Mural R.J."/>
            <person name="Istrail S."/>
            <person name="Sutton G.G."/>
            <person name="Florea L."/>
            <person name="Halpern A.L."/>
            <person name="Mobarry C.M."/>
            <person name="Lippert R."/>
            <person name="Walenz B."/>
            <person name="Shatkay H."/>
            <person name="Dew I."/>
            <person name="Miller J.R."/>
            <person name="Flanigan M.J."/>
            <person name="Edwards N.J."/>
            <person name="Bolanos R."/>
            <person name="Fasulo D."/>
            <person name="Halldorsson B.V."/>
            <person name="Hannenhalli S."/>
            <person name="Turner R."/>
            <person name="Yooseph S."/>
            <person name="Lu F."/>
            <person name="Nusskern D.R."/>
            <person name="Shue B.C."/>
            <person name="Zheng X.H."/>
            <person name="Zhong F."/>
            <person name="Delcher A.L."/>
            <person name="Huson D.H."/>
            <person name="Kravitz S.A."/>
            <person name="Mouchard L."/>
            <person name="Reinert K."/>
            <person name="Remington K.A."/>
            <person name="Clark A.G."/>
            <person name="Waterman M.S."/>
            <person name="Eichler E.E."/>
            <person name="Adams M.D."/>
            <person name="Hunkapiller M.W."/>
            <person name="Myers E.W."/>
            <person name="Venter J.C."/>
        </authorList>
    </citation>
    <scope>NUCLEOTIDE SEQUENCE [LARGE SCALE GENOMIC DNA]</scope>
</reference>
<reference key="4">
    <citation type="journal article" date="2004" name="Genome Res.">
        <title>The status, quality, and expansion of the NIH full-length cDNA project: the Mammalian Gene Collection (MGC).</title>
        <authorList>
            <consortium name="The MGC Project Team"/>
        </authorList>
    </citation>
    <scope>NUCLEOTIDE SEQUENCE [LARGE SCALE MRNA] (ISOFORM 2)</scope>
</reference>
<reference key="5">
    <citation type="journal article" date="2000" name="J. Biol. Chem.">
        <title>Receptor protein-tyrosine phosphatase RPTPmu binds to and dephosphorylates the catenin p120(ctn).</title>
        <authorList>
            <person name="Zondag G.C."/>
            <person name="Reynolds A.B."/>
            <person name="Moolenaar W.H."/>
        </authorList>
    </citation>
    <scope>FUNCTION</scope>
    <scope>CATALYTIC ACTIVITY</scope>
    <scope>SUBCELLULAR LOCATION</scope>
</reference>
<reference key="6">
    <citation type="journal article" date="2005" name="J. Proteome Res.">
        <title>Human plasma N-glycoproteome analysis by immunoaffinity subtraction, hydrazide chemistry, and mass spectrometry.</title>
        <authorList>
            <person name="Liu T."/>
            <person name="Qian W.-J."/>
            <person name="Gritsenko M.A."/>
            <person name="Camp D.G. II"/>
            <person name="Monroe M.E."/>
            <person name="Moore R.J."/>
            <person name="Smith R.D."/>
        </authorList>
    </citation>
    <scope>GLYCOSYLATION [LARGE SCALE ANALYSIS] AT ASN-131</scope>
    <source>
        <tissue>Plasma</tissue>
    </source>
</reference>
<reference key="7">
    <citation type="journal article" date="2008" name="Proc. Natl. Acad. Sci. U.S.A.">
        <title>A quantitative atlas of mitotic phosphorylation.</title>
        <authorList>
            <person name="Dephoure N."/>
            <person name="Zhou C."/>
            <person name="Villen J."/>
            <person name="Beausoleil S.A."/>
            <person name="Bakalarski C.E."/>
            <person name="Elledge S.J."/>
            <person name="Gygi S.P."/>
        </authorList>
    </citation>
    <scope>PHOSPHORYLATION [LARGE SCALE ANALYSIS] AT SER-821</scope>
    <scope>IDENTIFICATION BY MASS SPECTROMETRY [LARGE SCALE ANALYSIS]</scope>
    <source>
        <tissue>Cervix carcinoma</tissue>
    </source>
</reference>
<reference key="8">
    <citation type="journal article" date="1997" name="J. Biol. Chem.">
        <title>The crystal structure of domain 1 of receptor protein-tyrosine phosphatase mu.</title>
        <authorList>
            <person name="Hoffmann K.M."/>
            <person name="Tonks N.K."/>
            <person name="Barford D."/>
        </authorList>
    </citation>
    <scope>X-RAY CRYSTALLOGRAPHY (2.3 ANGSTROMS) OF 879-1156</scope>
</reference>
<reference key="9">
    <citation type="journal article" date="2011" name="Mol. Biol. Cell">
        <title>RPTPmu tyrosine phosphatase promotes adipogenic differentiation via modulation of p120 catenin phosphorylation.</title>
        <authorList>
            <person name="Kim W.K."/>
            <person name="Jung H."/>
            <person name="Kim E.Y."/>
            <person name="Kim D.H."/>
            <person name="Cho Y.S."/>
            <person name="Park B.C."/>
            <person name="Park S.G."/>
            <person name="Ko Y."/>
            <person name="Bae K.H."/>
            <person name="Lee S.C."/>
        </authorList>
    </citation>
    <scope>FUNCTION</scope>
    <scope>CATALYTIC ACTIVITY</scope>
</reference>
<reference key="10">
    <citation type="journal article" date="2006" name="EMBO J.">
        <title>Molecular analysis of receptor protein tyrosine phosphatase mu-mediated cell adhesion.</title>
        <authorList>
            <person name="Aricescu A.R."/>
            <person name="Hon W.-C."/>
            <person name="Siebold C."/>
            <person name="Lu W."/>
            <person name="van der Merwe P.A."/>
            <person name="Jones E.Y."/>
        </authorList>
    </citation>
    <scope>X-RAY CRYSTALLOGRAPHY (2.7 ANGSTROMS) OF 21-279</scope>
    <scope>FUNCTION</scope>
    <scope>DISULFIDE BONDS</scope>
</reference>
<reference evidence="14" key="11">
    <citation type="journal article" date="2007" name="Science">
        <title>Structure of a tyrosine phosphatase adhesive interaction reveals a spacer-clamp mechanism.</title>
        <authorList>
            <person name="Aricescu A.R."/>
            <person name="Siebold C."/>
            <person name="Choudhuri K."/>
            <person name="Chang V.T."/>
            <person name="Lu W."/>
            <person name="Davis S.J."/>
            <person name="van der Merwe P.A."/>
            <person name="Jones E.Y."/>
        </authorList>
    </citation>
    <scope>X-RAY CRYSTALLOGRAPHY (3.10 ANGSTROMS) OF 21-742</scope>
    <scope>GLYCOSYLATION AT ASN-72; ASN-92; ASN-131; ASN-406; ASN-414; ASN-454 AND ASN-544</scope>
    <scope>SUBCELLULAR LOCATION</scope>
    <scope>SUBUNIT</scope>
    <scope>MUTAGENESIS OF ARG-239; ARG-240; TYR-297 AND TRP-299</scope>
</reference>
<feature type="signal peptide" evidence="2">
    <location>
        <begin position="1"/>
        <end position="20"/>
    </location>
</feature>
<feature type="chain" id="PRO_0000025448" description="Receptor-type tyrosine-protein phosphatase mu">
    <location>
        <begin position="21"/>
        <end position="1452"/>
    </location>
</feature>
<feature type="topological domain" description="Extracellular" evidence="2">
    <location>
        <begin position="21"/>
        <end position="742"/>
    </location>
</feature>
<feature type="transmembrane region" description="Helical" evidence="2">
    <location>
        <begin position="743"/>
        <end position="764"/>
    </location>
</feature>
<feature type="topological domain" description="Cytoplasmic" evidence="2">
    <location>
        <begin position="765"/>
        <end position="1452"/>
    </location>
</feature>
<feature type="domain" description="MAM" evidence="4">
    <location>
        <begin position="22"/>
        <end position="184"/>
    </location>
</feature>
<feature type="domain" description="Ig-like C2-type">
    <location>
        <begin position="186"/>
        <end position="277"/>
    </location>
</feature>
<feature type="domain" description="Fibronectin type-III 1" evidence="6">
    <location>
        <begin position="284"/>
        <end position="379"/>
    </location>
</feature>
<feature type="domain" description="Fibronectin type-III 2" evidence="6">
    <location>
        <begin position="382"/>
        <end position="480"/>
    </location>
</feature>
<feature type="domain" description="Fibronectin type-III 3" evidence="6">
    <location>
        <begin position="482"/>
        <end position="587"/>
    </location>
</feature>
<feature type="domain" description="Fibronectin type-III 4" evidence="6">
    <location>
        <begin position="589"/>
        <end position="671"/>
    </location>
</feature>
<feature type="domain" description="Tyrosine-protein phosphatase 1" evidence="5">
    <location>
        <begin position="900"/>
        <end position="1154"/>
    </location>
</feature>
<feature type="domain" description="Tyrosine-protein phosphatase 2" evidence="5">
    <location>
        <begin position="1186"/>
        <end position="1448"/>
    </location>
</feature>
<feature type="active site" description="Phosphocysteine intermediate" evidence="1">
    <location>
        <position position="1095"/>
    </location>
</feature>
<feature type="active site" description="Phosphocysteine intermediate" evidence="1">
    <location>
        <position position="1389"/>
    </location>
</feature>
<feature type="binding site" evidence="1">
    <location>
        <position position="1063"/>
    </location>
    <ligand>
        <name>substrate</name>
    </ligand>
</feature>
<feature type="binding site" evidence="1">
    <location>
        <begin position="1095"/>
        <end position="1101"/>
    </location>
    <ligand>
        <name>substrate</name>
    </ligand>
</feature>
<feature type="binding site" evidence="1">
    <location>
        <position position="1139"/>
    </location>
    <ligand>
        <name>substrate</name>
    </ligand>
</feature>
<feature type="modified residue" description="Phosphoserine" evidence="15">
    <location>
        <position position="821"/>
    </location>
</feature>
<feature type="glycosylation site" description="N-linked (GlcNAc...) asparagine" evidence="2">
    <location>
        <position position="72"/>
    </location>
</feature>
<feature type="glycosylation site" description="N-linked (GlcNAc...) asparagine" evidence="2">
    <location>
        <position position="92"/>
    </location>
</feature>
<feature type="glycosylation site" description="N-linked (GlcNAc...) asparagine" evidence="8">
    <location>
        <position position="131"/>
    </location>
</feature>
<feature type="glycosylation site" description="N-linked (GlcNAc...) asparagine" evidence="2">
    <location>
        <position position="249"/>
    </location>
</feature>
<feature type="glycosylation site" description="N-linked (GlcNAc...) asparagine" evidence="10 14">
    <location>
        <position position="406"/>
    </location>
</feature>
<feature type="glycosylation site" description="N-linked (GlcNAc...) asparagine" evidence="10 14">
    <location>
        <position position="414"/>
    </location>
</feature>
<feature type="glycosylation site" description="N-linked (GlcNAc...) asparagine" evidence="10 14">
    <location>
        <position position="454"/>
    </location>
</feature>
<feature type="glycosylation site" description="N-linked (GlcNAc...) asparagine" evidence="2">
    <location>
        <position position="534"/>
    </location>
</feature>
<feature type="glycosylation site" description="N-linked (GlcNAc...) asparagine" evidence="10 14">
    <location>
        <position position="544"/>
    </location>
</feature>
<feature type="glycosylation site" description="N-linked (GlcNAc...) asparagine" evidence="2">
    <location>
        <position position="598"/>
    </location>
</feature>
<feature type="glycosylation site" description="N-linked (GlcNAc...) asparagine" evidence="2">
    <location>
        <position position="651"/>
    </location>
</feature>
<feature type="glycosylation site" description="N-linked (GlcNAc...) asparagine" evidence="2">
    <location>
        <position position="681"/>
    </location>
</feature>
<feature type="disulfide bond" evidence="3 9">
    <location>
        <begin position="27"/>
        <end position="36"/>
    </location>
</feature>
<feature type="disulfide bond" evidence="3 9">
    <location>
        <begin position="96"/>
        <end position="182"/>
    </location>
</feature>
<feature type="disulfide bond" evidence="3 9">
    <location>
        <begin position="206"/>
        <end position="260"/>
    </location>
</feature>
<feature type="splice variant" id="VSP_046677" description="In isoform 2." evidence="12">
    <original>P</original>
    <variation>PDPFVPTAILVPIN</variation>
    <location>
        <position position="842"/>
    </location>
</feature>
<feature type="sequence variant" id="VAR_046634" description="In dbSNP:rs35224276.">
    <original>S</original>
    <variation>R</variation>
    <location>
        <position position="39"/>
    </location>
</feature>
<feature type="mutagenesis site" description="Abolishes dimerization." evidence="10">
    <original>R</original>
    <variation>E</variation>
    <location>
        <position position="239"/>
    </location>
</feature>
<feature type="mutagenesis site" description="Abolishes dimerization." evidence="10">
    <original>R</original>
    <variation>E</variation>
    <location>
        <position position="240"/>
    </location>
</feature>
<feature type="mutagenesis site" description="Abolishes dimerization." evidence="10">
    <original>Y</original>
    <variation>A</variation>
    <location>
        <position position="297"/>
    </location>
</feature>
<feature type="mutagenesis site" description="Abolishes dimerization." evidence="10">
    <original>W</original>
    <variation>A</variation>
    <location>
        <position position="299"/>
    </location>
</feature>
<feature type="sequence conflict" description="In Ref. 1; CAA41226." evidence="13" ref="1">
    <original>G</original>
    <variation>T</variation>
    <location>
        <position position="3"/>
    </location>
</feature>
<feature type="sequence conflict" description="In Ref. 1; CAA41226." evidence="13" ref="1">
    <original>F</original>
    <variation>L</variation>
    <location>
        <position position="68"/>
    </location>
</feature>
<feature type="sequence conflict" description="In Ref. 4; AAI51843." evidence="13" ref="4">
    <original>P</original>
    <variation>L</variation>
    <location>
        <position position="1300"/>
    </location>
</feature>
<feature type="sequence conflict" description="In Ref. 1; CAA41226." evidence="13" ref="1">
    <original>R</original>
    <variation>P</variation>
    <location>
        <position position="1384"/>
    </location>
</feature>
<feature type="strand" evidence="17">
    <location>
        <begin position="29"/>
        <end position="31"/>
    </location>
</feature>
<feature type="helix" evidence="17">
    <location>
        <begin position="33"/>
        <end position="36"/>
    </location>
</feature>
<feature type="strand" evidence="17">
    <location>
        <begin position="42"/>
        <end position="45"/>
    </location>
</feature>
<feature type="strand" evidence="17">
    <location>
        <begin position="49"/>
        <end position="52"/>
    </location>
</feature>
<feature type="turn" evidence="17">
    <location>
        <begin position="53"/>
        <end position="55"/>
    </location>
</feature>
<feature type="strand" evidence="17">
    <location>
        <begin position="66"/>
        <end position="72"/>
    </location>
</feature>
<feature type="strand" evidence="17">
    <location>
        <begin position="81"/>
        <end position="85"/>
    </location>
</feature>
<feature type="strand" evidence="17">
    <location>
        <begin position="96"/>
        <end position="104"/>
    </location>
</feature>
<feature type="strand" evidence="17">
    <location>
        <begin position="106"/>
        <end position="109"/>
    </location>
</feature>
<feature type="strand" evidence="17">
    <location>
        <begin position="111"/>
        <end position="120"/>
    </location>
</feature>
<feature type="strand" evidence="17">
    <location>
        <begin position="129"/>
        <end position="132"/>
    </location>
</feature>
<feature type="strand" evidence="17">
    <location>
        <begin position="140"/>
        <end position="147"/>
    </location>
</feature>
<feature type="strand" evidence="17">
    <location>
        <begin position="155"/>
        <end position="163"/>
    </location>
</feature>
<feature type="strand" evidence="17">
    <location>
        <begin position="169"/>
        <end position="180"/>
    </location>
</feature>
<feature type="strand" evidence="17">
    <location>
        <begin position="183"/>
        <end position="185"/>
    </location>
</feature>
<feature type="strand" evidence="17">
    <location>
        <begin position="194"/>
        <end position="196"/>
    </location>
</feature>
<feature type="strand" evidence="17">
    <location>
        <begin position="198"/>
        <end position="200"/>
    </location>
</feature>
<feature type="strand" evidence="17">
    <location>
        <begin position="202"/>
        <end position="210"/>
    </location>
</feature>
<feature type="strand" evidence="17">
    <location>
        <begin position="217"/>
        <end position="222"/>
    </location>
</feature>
<feature type="strand" evidence="17">
    <location>
        <begin position="230"/>
        <end position="237"/>
    </location>
</feature>
<feature type="strand" evidence="17">
    <location>
        <begin position="240"/>
        <end position="247"/>
    </location>
</feature>
<feature type="helix" evidence="17">
    <location>
        <begin position="252"/>
        <end position="254"/>
    </location>
</feature>
<feature type="strand" evidence="17">
    <location>
        <begin position="256"/>
        <end position="264"/>
    </location>
</feature>
<feature type="strand" evidence="17">
    <location>
        <begin position="267"/>
        <end position="278"/>
    </location>
</feature>
<feature type="strand" evidence="18">
    <location>
        <begin position="284"/>
        <end position="286"/>
    </location>
</feature>
<feature type="strand" evidence="18">
    <location>
        <begin position="289"/>
        <end position="293"/>
    </location>
</feature>
<feature type="strand" evidence="18">
    <location>
        <begin position="298"/>
        <end position="301"/>
    </location>
</feature>
<feature type="strand" evidence="18">
    <location>
        <begin position="305"/>
        <end position="309"/>
    </location>
</feature>
<feature type="strand" evidence="18">
    <location>
        <begin position="315"/>
        <end position="326"/>
    </location>
</feature>
<feature type="strand" evidence="18">
    <location>
        <begin position="328"/>
        <end position="332"/>
    </location>
</feature>
<feature type="strand" evidence="18">
    <location>
        <begin position="335"/>
        <end position="340"/>
    </location>
</feature>
<feature type="strand" evidence="18">
    <location>
        <begin position="348"/>
        <end position="356"/>
    </location>
</feature>
<feature type="strand" evidence="18">
    <location>
        <begin position="370"/>
        <end position="373"/>
    </location>
</feature>
<feature type="strand" evidence="18">
    <location>
        <begin position="384"/>
        <end position="391"/>
    </location>
</feature>
<feature type="strand" evidence="18">
    <location>
        <begin position="396"/>
        <end position="401"/>
    </location>
</feature>
<feature type="helix" evidence="18">
    <location>
        <begin position="405"/>
        <end position="408"/>
    </location>
</feature>
<feature type="strand" evidence="18">
    <location>
        <begin position="410"/>
        <end position="412"/>
    </location>
</feature>
<feature type="strand" evidence="18">
    <location>
        <begin position="414"/>
        <end position="434"/>
    </location>
</feature>
<feature type="strand" evidence="18">
    <location>
        <begin position="443"/>
        <end position="446"/>
    </location>
</feature>
<feature type="strand" evidence="18">
    <location>
        <begin position="454"/>
        <end position="462"/>
    </location>
</feature>
<feature type="strand" evidence="18">
    <location>
        <begin position="467"/>
        <end position="469"/>
    </location>
</feature>
<feature type="strand" evidence="18">
    <location>
        <begin position="473"/>
        <end position="476"/>
    </location>
</feature>
<feature type="helix" evidence="19">
    <location>
        <begin position="487"/>
        <end position="489"/>
    </location>
</feature>
<feature type="strand" evidence="19">
    <location>
        <begin position="491"/>
        <end position="494"/>
    </location>
</feature>
<feature type="strand" evidence="19">
    <location>
        <begin position="499"/>
        <end position="502"/>
    </location>
</feature>
<feature type="strand" evidence="19">
    <location>
        <begin position="513"/>
        <end position="526"/>
    </location>
</feature>
<feature type="helix" evidence="20">
    <location>
        <begin position="533"/>
        <end position="535"/>
    </location>
</feature>
<feature type="strand" evidence="19">
    <location>
        <begin position="536"/>
        <end position="544"/>
    </location>
</feature>
<feature type="strand" evidence="19">
    <location>
        <begin position="546"/>
        <end position="550"/>
    </location>
</feature>
<feature type="strand" evidence="19">
    <location>
        <begin position="557"/>
        <end position="567"/>
    </location>
</feature>
<feature type="strand" evidence="19">
    <location>
        <begin position="575"/>
        <end position="580"/>
    </location>
</feature>
<feature type="strand" evidence="20">
    <location>
        <begin position="597"/>
        <end position="599"/>
    </location>
</feature>
<feature type="strand" evidence="19">
    <location>
        <begin position="604"/>
        <end position="608"/>
    </location>
</feature>
<feature type="strand" evidence="19">
    <location>
        <begin position="614"/>
        <end position="616"/>
    </location>
</feature>
<feature type="strand" evidence="19">
    <location>
        <begin position="620"/>
        <end position="627"/>
    </location>
</feature>
<feature type="strand" evidence="19">
    <location>
        <begin position="632"/>
        <end position="636"/>
    </location>
</feature>
<feature type="helix" evidence="19">
    <location>
        <begin position="649"/>
        <end position="652"/>
    </location>
</feature>
<feature type="turn" evidence="19">
    <location>
        <begin position="653"/>
        <end position="656"/>
    </location>
</feature>
<feature type="strand" evidence="19">
    <location>
        <begin position="658"/>
        <end position="666"/>
    </location>
</feature>
<feature type="strand" evidence="19">
    <location>
        <begin position="674"/>
        <end position="678"/>
    </location>
</feature>
<feature type="strand" evidence="19">
    <location>
        <begin position="698"/>
        <end position="708"/>
    </location>
</feature>
<feature type="strand" evidence="19">
    <location>
        <begin position="711"/>
        <end position="722"/>
    </location>
</feature>
<feature type="turn" evidence="16">
    <location>
        <begin position="882"/>
        <end position="884"/>
    </location>
</feature>
<feature type="helix" evidence="16">
    <location>
        <begin position="885"/>
        <end position="905"/>
    </location>
</feature>
<feature type="turn" evidence="16">
    <location>
        <begin position="916"/>
        <end position="919"/>
    </location>
</feature>
<feature type="helix" evidence="16">
    <location>
        <begin position="921"/>
        <end position="926"/>
    </location>
</feature>
<feature type="helix" evidence="16">
    <location>
        <begin position="936"/>
        <end position="938"/>
    </location>
</feature>
<feature type="strand" evidence="16">
    <location>
        <begin position="939"/>
        <end position="941"/>
    </location>
</feature>
<feature type="turn" evidence="16">
    <location>
        <begin position="949"/>
        <end position="952"/>
    </location>
</feature>
<feature type="strand" evidence="16">
    <location>
        <begin position="953"/>
        <end position="961"/>
    </location>
</feature>
<feature type="strand" evidence="16">
    <location>
        <begin position="964"/>
        <end position="971"/>
    </location>
</feature>
<feature type="helix" evidence="16">
    <location>
        <begin position="976"/>
        <end position="978"/>
    </location>
</feature>
<feature type="helix" evidence="16">
    <location>
        <begin position="979"/>
        <end position="988"/>
    </location>
</feature>
<feature type="strand" evidence="16">
    <location>
        <begin position="993"/>
        <end position="996"/>
    </location>
</feature>
<feature type="strand" evidence="16">
    <location>
        <begin position="1000"/>
        <end position="1002"/>
    </location>
</feature>
<feature type="strand" evidence="16">
    <location>
        <begin position="1014"/>
        <end position="1019"/>
    </location>
</feature>
<feature type="strand" evidence="16">
    <location>
        <begin position="1022"/>
        <end position="1032"/>
    </location>
</feature>
<feature type="strand" evidence="16">
    <location>
        <begin position="1035"/>
        <end position="1044"/>
    </location>
</feature>
<feature type="strand" evidence="16">
    <location>
        <begin position="1051"/>
        <end position="1058"/>
    </location>
</feature>
<feature type="strand" evidence="16">
    <location>
        <begin position="1063"/>
        <end position="1065"/>
    </location>
</feature>
<feature type="helix" evidence="16">
    <location>
        <begin position="1071"/>
        <end position="1083"/>
    </location>
</feature>
<feature type="strand" evidence="16">
    <location>
        <begin position="1091"/>
        <end position="1099"/>
    </location>
</feature>
<feature type="helix" evidence="16">
    <location>
        <begin position="1100"/>
        <end position="1118"/>
    </location>
</feature>
<feature type="strand" evidence="16">
    <location>
        <begin position="1119"/>
        <end position="1121"/>
    </location>
</feature>
<feature type="helix" evidence="16">
    <location>
        <begin position="1123"/>
        <end position="1133"/>
    </location>
</feature>
<feature type="helix" evidence="16">
    <location>
        <begin position="1141"/>
        <end position="1155"/>
    </location>
</feature>
<gene>
    <name type="primary">PTPRM</name>
    <name type="synonym">PTPRL1</name>
</gene>
<proteinExistence type="evidence at protein level"/>
<comment type="function">
    <text evidence="7 9 10 11">Receptor protein-tyrosine phosphatase that mediates homotypic cell-cell interactions and plays a role in adipogenic differentiation via modulation of p120 catenin/CTNND1 phosphorylation (PubMed:10753936, PubMed:17761881). Promotes CTNND1 dephosphorylation and prevents its cytoplasmic localization where it inhibits SLC2A4 membrane trafficking. In turn, SLC2A4 is directed to the plasma membrane and performs its glucose transporter function (PubMed:21998202).</text>
</comment>
<comment type="catalytic activity">
    <reaction evidence="7 11">
        <text>O-phospho-L-tyrosyl-[protein] + H2O = L-tyrosyl-[protein] + phosphate</text>
        <dbReference type="Rhea" id="RHEA:10684"/>
        <dbReference type="Rhea" id="RHEA-COMP:10136"/>
        <dbReference type="Rhea" id="RHEA-COMP:20101"/>
        <dbReference type="ChEBI" id="CHEBI:15377"/>
        <dbReference type="ChEBI" id="CHEBI:43474"/>
        <dbReference type="ChEBI" id="CHEBI:46858"/>
        <dbReference type="ChEBI" id="CHEBI:61978"/>
        <dbReference type="EC" id="3.1.3.48"/>
    </reaction>
</comment>
<comment type="subunit">
    <text evidence="10">Homodimer.</text>
</comment>
<comment type="interaction">
    <interactant intactId="EBI-2257317">
        <id>P28827</id>
    </interactant>
    <interactant intactId="EBI-2257317">
        <id>P28827</id>
        <label>PTPRM</label>
    </interactant>
    <organismsDiffer>false</organismsDiffer>
    <experiments>2</experiments>
</comment>
<comment type="interaction">
    <interactant intactId="EBI-2257317">
        <id>P28827</id>
    </interactant>
    <interactant intactId="EBI-984420">
        <id>P09803</id>
        <label>Cdh1</label>
    </interactant>
    <organismsDiffer>true</organismsDiffer>
    <experiments>3</experiments>
</comment>
<comment type="subcellular location">
    <subcellularLocation>
        <location evidence="7">Cell membrane</location>
        <topology>Single-pass type I membrane protein</topology>
    </subcellularLocation>
    <text evidence="7">Localizes in regions of cell-cell contact.</text>
</comment>
<comment type="alternative products">
    <event type="alternative splicing"/>
    <isoform>
        <id>P28827-1</id>
        <name>1</name>
        <sequence type="displayed"/>
    </isoform>
    <isoform>
        <id>P28827-2</id>
        <name>2</name>
        <sequence type="described" ref="VSP_046677"/>
    </isoform>
</comment>
<comment type="similarity">
    <text evidence="13">Belongs to the protein-tyrosine phosphatase family. Receptor class 2B subfamily.</text>
</comment>
<sequence length="1452" mass="163682">MRGLGTCLATLAGLLLTAAGETFSGGCLFDEPYSTCGYSQSEGDDFNWEQVNTLTKPTSDPWMPSGSFMLVNASGRPEGQRAHLLLPQLKENDTHCIDFHYFVSSKSNSPPGLLNVYVKVNNGPLGNPIWNISGDPTRTWNRAELAISTFWPNFYQVIFEVITSGHQGYLAIDEVKVLGHPCTRTPHFLRIQNVEVNAGQFATFQCSAIGRTVAGDRLWLQGIDVRDAPLKEIKVTSSRRFIASFNVVNTTKRDAGKYRCMIRTEGGVGISNYAELVVKEPPVPIAPPQLASVGATYLWIQLNANSINGDGPIVAREVEYCTASGSWNDRQPVDSTSYKIGHLDPDTEYEISVLLTRPGEGGTGSPGPALRTRTKCADPMRGPRKLEVVEVKSRQITIRWEPFGYNVTRCHSYNLTVHYCYQVGGQEQVREEVSWDTENSHPQHTITNLSPYTNVSVKLILMNPEGRKESQELIVQTDEDLPGAVPTESIQGSTFEEKIFLQWREPTQTYGVITLYEITYKAVSSFDPEIDLSNQSGRVSKLGNETHFLFFGLYPGTTYSFTIRASTAKGFGPPATNQFTTKISAPSMPAYELETPLNQTDNTVTVMLKPAHSRGAPVSVYQIVVEEERPRRTKKTTEILKCYPVPIHFQNASLLNSQYYFAAEFPADSLQAAQPFTIGDNKTYNGYWNTPLLPYKSYRIYFQAASRANGETKIDCVQVATKGAATPKPVPEPEKQTDHTVKIAGVIAGILLFVIIFLGVVLVMKKRKLAKKRKETMSSTRQEMTVMVNSMDKSYAEQGTNCDEAFSFMDTHNLNGRSVSSPSSFTMKTNTLSTSVPNSYYPDETHTMASDTSSLVQSHTYKKREPADVPYQTGQLHPAIRVADLLQHITQMKCAEGYGFKEEYESFFEGQSAPWDSAKKDENRMKNRYGNIIAYDHSRVRLQTIEGDTNSDYINGNYIDGYHRPNHYIATQGPMQETIYDFWRMVWHENTASIIMVTNLVEVGRVKCCKYWPDDTEIYKDIKVTLIETELLAEYVIRTFAVEKRGVHEIREIRQFHFTGWPDHGVPYHATGLLGFVRQVKSKSPPSAGPLVVHCSAGAGRTGCFIVIDIMLDMAEREGVVDIYNCVRELRSRRVNMVQTEEQYVFIHDAILEACLCGDTSVPASQVRSLYYDMNKLDPQTNSSQIKEEFRTLNMVTPTLRVEDCSIALLPRNHEKNRCMDILPPDRCLPFLITIDGESSNYINAALMDSYKQPSAFIVTQHPLPNTVKDFWRLVLDYHCTSVVMLNDVDPAQLCPQYWPENGVHRHGPIQVEFVSADLEEDIISRIFRIYNAARPQDGYRMVQQFQFLGWPMYRDTPVSKRSFLKLIRQVDKWQEEYNGGEGRTVVHCLNGGGRSGTFCAISIVCEMLRHQRTVDVFHAVKTLRNNKPNMVDLLDQYKFCYEVALEYLNSG</sequence>